<sequence>MLPLVALVGRPNVGKSTIFNALTRTRDALVHDQPGVTRDRNYGVCRLDEQQPFIVVDTGGIAGDEEGLAGATARQARAAAGEADLVLFVVDGREGASSLDDEILAWLRKLARPTVLVINKIDGTDEETVRSEFARYGFSDVVALSAAHRQGIDELLDEVGARLPEEGAGELLDNDPARVRIAFVGRPNVGKSTLVNRLLGEERMIASEVPGTTRDSIAVDLERDGRQYRLIDTAGLRRRGKVEEAVEKFSAFKTLQAIEQCQVAVLMLDATEGVTDQDATILGAILDAGRALVVAINKWDGQSDYQRAQAEDLLSRKLGFVNWAEAVRISALHGSGMRELFQAIHRAHASATHEFSTSEVNQALEIAYETNPPPSIRGHVSKLRYVHPGGANPPTFIVHGTRLKVLPESYKRYLENFFRKRFKLVGTPVRFIFREGANPYEGKKNPLSDRQVARKRRLMRHVKGK</sequence>
<organism>
    <name type="scientific">Xanthomonas axonopodis pv. citri (strain 306)</name>
    <dbReference type="NCBI Taxonomy" id="190486"/>
    <lineage>
        <taxon>Bacteria</taxon>
        <taxon>Pseudomonadati</taxon>
        <taxon>Pseudomonadota</taxon>
        <taxon>Gammaproteobacteria</taxon>
        <taxon>Lysobacterales</taxon>
        <taxon>Lysobacteraceae</taxon>
        <taxon>Xanthomonas</taxon>
    </lineage>
</organism>
<dbReference type="EMBL" id="AE008923">
    <property type="protein sequence ID" value="AAM36883.1"/>
    <property type="molecule type" value="Genomic_DNA"/>
</dbReference>
<dbReference type="RefSeq" id="WP_003482878.1">
    <property type="nucleotide sequence ID" value="NC_003919.1"/>
</dbReference>
<dbReference type="SMR" id="Q8PKY6"/>
<dbReference type="GeneID" id="97510389"/>
<dbReference type="KEGG" id="xac:XAC2021"/>
<dbReference type="eggNOG" id="COG1160">
    <property type="taxonomic scope" value="Bacteria"/>
</dbReference>
<dbReference type="HOGENOM" id="CLU_016077_6_2_6"/>
<dbReference type="Proteomes" id="UP000000576">
    <property type="component" value="Chromosome"/>
</dbReference>
<dbReference type="GO" id="GO:0016887">
    <property type="term" value="F:ATP hydrolysis activity"/>
    <property type="evidence" value="ECO:0007669"/>
    <property type="project" value="InterPro"/>
</dbReference>
<dbReference type="GO" id="GO:0005525">
    <property type="term" value="F:GTP binding"/>
    <property type="evidence" value="ECO:0007669"/>
    <property type="project" value="UniProtKB-UniRule"/>
</dbReference>
<dbReference type="GO" id="GO:0043022">
    <property type="term" value="F:ribosome binding"/>
    <property type="evidence" value="ECO:0007669"/>
    <property type="project" value="TreeGrafter"/>
</dbReference>
<dbReference type="GO" id="GO:0042254">
    <property type="term" value="P:ribosome biogenesis"/>
    <property type="evidence" value="ECO:0007669"/>
    <property type="project" value="UniProtKB-KW"/>
</dbReference>
<dbReference type="CDD" id="cd01894">
    <property type="entry name" value="EngA1"/>
    <property type="match status" value="1"/>
</dbReference>
<dbReference type="CDD" id="cd01895">
    <property type="entry name" value="EngA2"/>
    <property type="match status" value="1"/>
</dbReference>
<dbReference type="FunFam" id="3.30.300.20:FF:000004">
    <property type="entry name" value="GTPase Der"/>
    <property type="match status" value="1"/>
</dbReference>
<dbReference type="FunFam" id="3.40.50.300:FF:000040">
    <property type="entry name" value="GTPase Der"/>
    <property type="match status" value="1"/>
</dbReference>
<dbReference type="FunFam" id="3.40.50.300:FF:000057">
    <property type="entry name" value="GTPase Der"/>
    <property type="match status" value="1"/>
</dbReference>
<dbReference type="Gene3D" id="3.30.300.20">
    <property type="match status" value="1"/>
</dbReference>
<dbReference type="Gene3D" id="3.40.50.300">
    <property type="entry name" value="P-loop containing nucleotide triphosphate hydrolases"/>
    <property type="match status" value="2"/>
</dbReference>
<dbReference type="HAMAP" id="MF_00195">
    <property type="entry name" value="GTPase_Der"/>
    <property type="match status" value="1"/>
</dbReference>
<dbReference type="InterPro" id="IPR003593">
    <property type="entry name" value="AAA+_ATPase"/>
</dbReference>
<dbReference type="InterPro" id="IPR031166">
    <property type="entry name" value="G_ENGA"/>
</dbReference>
<dbReference type="InterPro" id="IPR006073">
    <property type="entry name" value="GTP-bd"/>
</dbReference>
<dbReference type="InterPro" id="IPR016484">
    <property type="entry name" value="GTPase_Der"/>
</dbReference>
<dbReference type="InterPro" id="IPR032859">
    <property type="entry name" value="KH_dom-like"/>
</dbReference>
<dbReference type="InterPro" id="IPR015946">
    <property type="entry name" value="KH_dom-like_a/b"/>
</dbReference>
<dbReference type="InterPro" id="IPR027417">
    <property type="entry name" value="P-loop_NTPase"/>
</dbReference>
<dbReference type="InterPro" id="IPR005225">
    <property type="entry name" value="Small_GTP-bd"/>
</dbReference>
<dbReference type="NCBIfam" id="TIGR03594">
    <property type="entry name" value="GTPase_EngA"/>
    <property type="match status" value="1"/>
</dbReference>
<dbReference type="NCBIfam" id="TIGR00231">
    <property type="entry name" value="small_GTP"/>
    <property type="match status" value="2"/>
</dbReference>
<dbReference type="PANTHER" id="PTHR43834">
    <property type="entry name" value="GTPASE DER"/>
    <property type="match status" value="1"/>
</dbReference>
<dbReference type="PANTHER" id="PTHR43834:SF6">
    <property type="entry name" value="GTPASE DER"/>
    <property type="match status" value="1"/>
</dbReference>
<dbReference type="Pfam" id="PF14714">
    <property type="entry name" value="KH_dom-like"/>
    <property type="match status" value="1"/>
</dbReference>
<dbReference type="Pfam" id="PF01926">
    <property type="entry name" value="MMR_HSR1"/>
    <property type="match status" value="2"/>
</dbReference>
<dbReference type="PIRSF" id="PIRSF006485">
    <property type="entry name" value="GTP-binding_EngA"/>
    <property type="match status" value="1"/>
</dbReference>
<dbReference type="PRINTS" id="PR00326">
    <property type="entry name" value="GTP1OBG"/>
</dbReference>
<dbReference type="SMART" id="SM00382">
    <property type="entry name" value="AAA"/>
    <property type="match status" value="2"/>
</dbReference>
<dbReference type="SUPFAM" id="SSF52540">
    <property type="entry name" value="P-loop containing nucleoside triphosphate hydrolases"/>
    <property type="match status" value="2"/>
</dbReference>
<dbReference type="PROSITE" id="PS51712">
    <property type="entry name" value="G_ENGA"/>
    <property type="match status" value="2"/>
</dbReference>
<gene>
    <name evidence="1" type="primary">der</name>
    <name type="synonym">engA</name>
    <name type="ordered locus">XAC2021</name>
</gene>
<name>DER_XANAC</name>
<accession>Q8PKY6</accession>
<evidence type="ECO:0000255" key="1">
    <source>
        <dbReference type="HAMAP-Rule" id="MF_00195"/>
    </source>
</evidence>
<protein>
    <recommendedName>
        <fullName evidence="1">GTPase Der</fullName>
    </recommendedName>
    <alternativeName>
        <fullName evidence="1">GTP-binding protein EngA</fullName>
    </alternativeName>
</protein>
<feature type="chain" id="PRO_0000179073" description="GTPase Der">
    <location>
        <begin position="1"/>
        <end position="465"/>
    </location>
</feature>
<feature type="domain" description="EngA-type G 1">
    <location>
        <begin position="3"/>
        <end position="167"/>
    </location>
</feature>
<feature type="domain" description="EngA-type G 2">
    <location>
        <begin position="179"/>
        <end position="352"/>
    </location>
</feature>
<feature type="domain" description="KH-like" evidence="1">
    <location>
        <begin position="353"/>
        <end position="437"/>
    </location>
</feature>
<feature type="binding site" evidence="1">
    <location>
        <begin position="9"/>
        <end position="16"/>
    </location>
    <ligand>
        <name>GTP</name>
        <dbReference type="ChEBI" id="CHEBI:37565"/>
        <label>1</label>
    </ligand>
</feature>
<feature type="binding site" evidence="1">
    <location>
        <begin position="57"/>
        <end position="61"/>
    </location>
    <ligand>
        <name>GTP</name>
        <dbReference type="ChEBI" id="CHEBI:37565"/>
        <label>1</label>
    </ligand>
</feature>
<feature type="binding site" evidence="1">
    <location>
        <begin position="119"/>
        <end position="122"/>
    </location>
    <ligand>
        <name>GTP</name>
        <dbReference type="ChEBI" id="CHEBI:37565"/>
        <label>1</label>
    </ligand>
</feature>
<feature type="binding site" evidence="1">
    <location>
        <begin position="185"/>
        <end position="192"/>
    </location>
    <ligand>
        <name>GTP</name>
        <dbReference type="ChEBI" id="CHEBI:37565"/>
        <label>2</label>
    </ligand>
</feature>
<feature type="binding site" evidence="1">
    <location>
        <begin position="232"/>
        <end position="236"/>
    </location>
    <ligand>
        <name>GTP</name>
        <dbReference type="ChEBI" id="CHEBI:37565"/>
        <label>2</label>
    </ligand>
</feature>
<feature type="binding site" evidence="1">
    <location>
        <begin position="297"/>
        <end position="300"/>
    </location>
    <ligand>
        <name>GTP</name>
        <dbReference type="ChEBI" id="CHEBI:37565"/>
        <label>2</label>
    </ligand>
</feature>
<comment type="function">
    <text evidence="1">GTPase that plays an essential role in the late steps of ribosome biogenesis.</text>
</comment>
<comment type="subunit">
    <text evidence="1">Associates with the 50S ribosomal subunit.</text>
</comment>
<comment type="similarity">
    <text evidence="1">Belongs to the TRAFAC class TrmE-Era-EngA-EngB-Septin-like GTPase superfamily. EngA (Der) GTPase family.</text>
</comment>
<keyword id="KW-0342">GTP-binding</keyword>
<keyword id="KW-0547">Nucleotide-binding</keyword>
<keyword id="KW-0677">Repeat</keyword>
<keyword id="KW-0690">Ribosome biogenesis</keyword>
<reference key="1">
    <citation type="journal article" date="2002" name="Nature">
        <title>Comparison of the genomes of two Xanthomonas pathogens with differing host specificities.</title>
        <authorList>
            <person name="da Silva A.C.R."/>
            <person name="Ferro J.A."/>
            <person name="Reinach F.C."/>
            <person name="Farah C.S."/>
            <person name="Furlan L.R."/>
            <person name="Quaggio R.B."/>
            <person name="Monteiro-Vitorello C.B."/>
            <person name="Van Sluys M.A."/>
            <person name="Almeida N.F. Jr."/>
            <person name="Alves L.M.C."/>
            <person name="do Amaral A.M."/>
            <person name="Bertolini M.C."/>
            <person name="Camargo L.E.A."/>
            <person name="Camarotte G."/>
            <person name="Cannavan F."/>
            <person name="Cardozo J."/>
            <person name="Chambergo F."/>
            <person name="Ciapina L.P."/>
            <person name="Cicarelli R.M.B."/>
            <person name="Coutinho L.L."/>
            <person name="Cursino-Santos J.R."/>
            <person name="El-Dorry H."/>
            <person name="Faria J.B."/>
            <person name="Ferreira A.J.S."/>
            <person name="Ferreira R.C.C."/>
            <person name="Ferro M.I.T."/>
            <person name="Formighieri E.F."/>
            <person name="Franco M.C."/>
            <person name="Greggio C.C."/>
            <person name="Gruber A."/>
            <person name="Katsuyama A.M."/>
            <person name="Kishi L.T."/>
            <person name="Leite R.P."/>
            <person name="Lemos E.G.M."/>
            <person name="Lemos M.V.F."/>
            <person name="Locali E.C."/>
            <person name="Machado M.A."/>
            <person name="Madeira A.M.B.N."/>
            <person name="Martinez-Rossi N.M."/>
            <person name="Martins E.C."/>
            <person name="Meidanis J."/>
            <person name="Menck C.F.M."/>
            <person name="Miyaki C.Y."/>
            <person name="Moon D.H."/>
            <person name="Moreira L.M."/>
            <person name="Novo M.T.M."/>
            <person name="Okura V.K."/>
            <person name="Oliveira M.C."/>
            <person name="Oliveira V.R."/>
            <person name="Pereira H.A."/>
            <person name="Rossi A."/>
            <person name="Sena J.A.D."/>
            <person name="Silva C."/>
            <person name="de Souza R.F."/>
            <person name="Spinola L.A.F."/>
            <person name="Takita M.A."/>
            <person name="Tamura R.E."/>
            <person name="Teixeira E.C."/>
            <person name="Tezza R.I.D."/>
            <person name="Trindade dos Santos M."/>
            <person name="Truffi D."/>
            <person name="Tsai S.M."/>
            <person name="White F.F."/>
            <person name="Setubal J.C."/>
            <person name="Kitajima J.P."/>
        </authorList>
    </citation>
    <scope>NUCLEOTIDE SEQUENCE [LARGE SCALE GENOMIC DNA]</scope>
    <source>
        <strain>306</strain>
    </source>
</reference>
<proteinExistence type="inferred from homology"/>